<accession>Q3IRT1</accession>
<organism>
    <name type="scientific">Natronomonas pharaonis (strain ATCC 35678 / DSM 2160 / CIP 103997 / JCM 8858 / NBRC 14720 / NCIMB 2260 / Gabara)</name>
    <name type="common">Halobacterium pharaonis</name>
    <dbReference type="NCBI Taxonomy" id="348780"/>
    <lineage>
        <taxon>Archaea</taxon>
        <taxon>Methanobacteriati</taxon>
        <taxon>Methanobacteriota</taxon>
        <taxon>Stenosarchaea group</taxon>
        <taxon>Halobacteria</taxon>
        <taxon>Halobacteriales</taxon>
        <taxon>Haloarculaceae</taxon>
        <taxon>Natronomonas</taxon>
    </lineage>
</organism>
<protein>
    <recommendedName>
        <fullName evidence="1">Histidinol-phosphate aminotransferase</fullName>
        <ecNumber evidence="1">2.6.1.9</ecNumber>
    </recommendedName>
    <alternativeName>
        <fullName evidence="1">Imidazole acetol-phosphate transaminase</fullName>
    </alternativeName>
</protein>
<gene>
    <name evidence="1" type="primary">hisC</name>
    <name type="ordered locus">NP_2140A</name>
</gene>
<name>HIS8_NATPD</name>
<keyword id="KW-0028">Amino-acid biosynthesis</keyword>
<keyword id="KW-0032">Aminotransferase</keyword>
<keyword id="KW-0368">Histidine biosynthesis</keyword>
<keyword id="KW-0663">Pyridoxal phosphate</keyword>
<keyword id="KW-1185">Reference proteome</keyword>
<keyword id="KW-0808">Transferase</keyword>
<reference key="1">
    <citation type="journal article" date="2005" name="Genome Res.">
        <title>Living with two extremes: conclusions from the genome sequence of Natronomonas pharaonis.</title>
        <authorList>
            <person name="Falb M."/>
            <person name="Pfeiffer F."/>
            <person name="Palm P."/>
            <person name="Rodewald K."/>
            <person name="Hickmann V."/>
            <person name="Tittor J."/>
            <person name="Oesterhelt D."/>
        </authorList>
    </citation>
    <scope>NUCLEOTIDE SEQUENCE [LARGE SCALE GENOMIC DNA]</scope>
    <source>
        <strain>ATCC 35678 / DSM 2160 / CIP 103997 / JCM 8858 / NBRC 14720 / NCIMB 2260 / Gabara</strain>
    </source>
</reference>
<proteinExistence type="inferred from homology"/>
<sequence length="355" mass="38236">MQPRDLSHHVAYEAGRGIEEVARELGLDPDDLVKLSSNENPFGPSPKAAEAIREHADRVNSYPKAAATDLRGEIGDLLSVDAAQVWLGNGGDGALDYLARAMLDPDDGVLVPDPGFAYYGMSARYHHGQVNSYPIEKDDDFEQSPDAILESYDGERIVYLTSPHNPTGSEVSLSDVEAVAEGTDEETLVVVDEAYGEFADSPSAVALVEERDDVAVLRTFSKAYGLAGVRLGYAVVPGEWADAYARVNTPFAASEIACRAGLAALEDDAHVEKTVETARWAREYIRSTLECRTYESAGNFVLCAVGDGGEVAEAAQKEGVIVRDTTSFGLPSCIRITCGTREETKRAVEVVNDLL</sequence>
<evidence type="ECO:0000255" key="1">
    <source>
        <dbReference type="HAMAP-Rule" id="MF_01023"/>
    </source>
</evidence>
<dbReference type="EC" id="2.6.1.9" evidence="1"/>
<dbReference type="EMBL" id="CR936257">
    <property type="protein sequence ID" value="CAI49161.1"/>
    <property type="molecule type" value="Genomic_DNA"/>
</dbReference>
<dbReference type="RefSeq" id="WP_011322789.1">
    <property type="nucleotide sequence ID" value="NC_007426.1"/>
</dbReference>
<dbReference type="SMR" id="Q3IRT1"/>
<dbReference type="STRING" id="348780.NP_2140A"/>
<dbReference type="EnsemblBacteria" id="CAI49161">
    <property type="protein sequence ID" value="CAI49161"/>
    <property type="gene ID" value="NP_2140A"/>
</dbReference>
<dbReference type="GeneID" id="3702816"/>
<dbReference type="KEGG" id="nph:NP_2140A"/>
<dbReference type="eggNOG" id="arCOG04273">
    <property type="taxonomic scope" value="Archaea"/>
</dbReference>
<dbReference type="HOGENOM" id="CLU_017584_3_3_2"/>
<dbReference type="OrthoDB" id="9929at2157"/>
<dbReference type="UniPathway" id="UPA00031">
    <property type="reaction ID" value="UER00012"/>
</dbReference>
<dbReference type="Proteomes" id="UP000002698">
    <property type="component" value="Chromosome"/>
</dbReference>
<dbReference type="GO" id="GO:0004400">
    <property type="term" value="F:histidinol-phosphate transaminase activity"/>
    <property type="evidence" value="ECO:0007669"/>
    <property type="project" value="UniProtKB-UniRule"/>
</dbReference>
<dbReference type="GO" id="GO:0030170">
    <property type="term" value="F:pyridoxal phosphate binding"/>
    <property type="evidence" value="ECO:0007669"/>
    <property type="project" value="InterPro"/>
</dbReference>
<dbReference type="GO" id="GO:0000105">
    <property type="term" value="P:L-histidine biosynthetic process"/>
    <property type="evidence" value="ECO:0007669"/>
    <property type="project" value="UniProtKB-UniRule"/>
</dbReference>
<dbReference type="CDD" id="cd00609">
    <property type="entry name" value="AAT_like"/>
    <property type="match status" value="1"/>
</dbReference>
<dbReference type="Gene3D" id="3.90.1150.10">
    <property type="entry name" value="Aspartate Aminotransferase, domain 1"/>
    <property type="match status" value="1"/>
</dbReference>
<dbReference type="Gene3D" id="3.40.640.10">
    <property type="entry name" value="Type I PLP-dependent aspartate aminotransferase-like (Major domain)"/>
    <property type="match status" value="1"/>
</dbReference>
<dbReference type="HAMAP" id="MF_01023">
    <property type="entry name" value="HisC_aminotrans_2"/>
    <property type="match status" value="1"/>
</dbReference>
<dbReference type="InterPro" id="IPR001917">
    <property type="entry name" value="Aminotrans_II_pyridoxalP_BS"/>
</dbReference>
<dbReference type="InterPro" id="IPR004839">
    <property type="entry name" value="Aminotransferase_I/II_large"/>
</dbReference>
<dbReference type="InterPro" id="IPR005861">
    <property type="entry name" value="HisP_aminotrans"/>
</dbReference>
<dbReference type="InterPro" id="IPR050106">
    <property type="entry name" value="HistidinolP_aminotransfase"/>
</dbReference>
<dbReference type="InterPro" id="IPR015424">
    <property type="entry name" value="PyrdxlP-dep_Trfase"/>
</dbReference>
<dbReference type="InterPro" id="IPR015421">
    <property type="entry name" value="PyrdxlP-dep_Trfase_major"/>
</dbReference>
<dbReference type="InterPro" id="IPR015422">
    <property type="entry name" value="PyrdxlP-dep_Trfase_small"/>
</dbReference>
<dbReference type="NCBIfam" id="TIGR01141">
    <property type="entry name" value="hisC"/>
    <property type="match status" value="1"/>
</dbReference>
<dbReference type="PANTHER" id="PTHR43643:SF6">
    <property type="entry name" value="HISTIDINOL-PHOSPHATE AMINOTRANSFERASE"/>
    <property type="match status" value="1"/>
</dbReference>
<dbReference type="PANTHER" id="PTHR43643">
    <property type="entry name" value="HISTIDINOL-PHOSPHATE AMINOTRANSFERASE 2"/>
    <property type="match status" value="1"/>
</dbReference>
<dbReference type="Pfam" id="PF00155">
    <property type="entry name" value="Aminotran_1_2"/>
    <property type="match status" value="1"/>
</dbReference>
<dbReference type="SUPFAM" id="SSF53383">
    <property type="entry name" value="PLP-dependent transferases"/>
    <property type="match status" value="1"/>
</dbReference>
<dbReference type="PROSITE" id="PS00599">
    <property type="entry name" value="AA_TRANSFER_CLASS_2"/>
    <property type="match status" value="1"/>
</dbReference>
<feature type="chain" id="PRO_0000153502" description="Histidinol-phosphate aminotransferase">
    <location>
        <begin position="1"/>
        <end position="355"/>
    </location>
</feature>
<feature type="modified residue" description="N6-(pyridoxal phosphate)lysine" evidence="1">
    <location>
        <position position="222"/>
    </location>
</feature>
<comment type="catalytic activity">
    <reaction evidence="1">
        <text>L-histidinol phosphate + 2-oxoglutarate = 3-(imidazol-4-yl)-2-oxopropyl phosphate + L-glutamate</text>
        <dbReference type="Rhea" id="RHEA:23744"/>
        <dbReference type="ChEBI" id="CHEBI:16810"/>
        <dbReference type="ChEBI" id="CHEBI:29985"/>
        <dbReference type="ChEBI" id="CHEBI:57766"/>
        <dbReference type="ChEBI" id="CHEBI:57980"/>
        <dbReference type="EC" id="2.6.1.9"/>
    </reaction>
</comment>
<comment type="cofactor">
    <cofactor evidence="1">
        <name>pyridoxal 5'-phosphate</name>
        <dbReference type="ChEBI" id="CHEBI:597326"/>
    </cofactor>
</comment>
<comment type="pathway">
    <text evidence="1">Amino-acid biosynthesis; L-histidine biosynthesis; L-histidine from 5-phospho-alpha-D-ribose 1-diphosphate: step 7/9.</text>
</comment>
<comment type="similarity">
    <text evidence="1">Belongs to the class-II pyridoxal-phosphate-dependent aminotransferase family. Histidinol-phosphate aminotransferase subfamily.</text>
</comment>